<keyword id="KW-0285">Flavoprotein</keyword>
<keyword id="KW-0288">FMN</keyword>
<keyword id="KW-0520">NAD</keyword>
<keyword id="KW-0560">Oxidoreductase</keyword>
<name>AZOR1_COLP3</name>
<reference key="1">
    <citation type="journal article" date="2005" name="Proc. Natl. Acad. Sci. U.S.A.">
        <title>The psychrophilic lifestyle as revealed by the genome sequence of Colwellia psychrerythraea 34H through genomic and proteomic analyses.</title>
        <authorList>
            <person name="Methe B.A."/>
            <person name="Nelson K.E."/>
            <person name="Deming J.W."/>
            <person name="Momen B."/>
            <person name="Melamud E."/>
            <person name="Zhang X."/>
            <person name="Moult J."/>
            <person name="Madupu R."/>
            <person name="Nelson W.C."/>
            <person name="Dodson R.J."/>
            <person name="Brinkac L.M."/>
            <person name="Daugherty S.C."/>
            <person name="Durkin A.S."/>
            <person name="DeBoy R.T."/>
            <person name="Kolonay J.F."/>
            <person name="Sullivan S.A."/>
            <person name="Zhou L."/>
            <person name="Davidsen T.M."/>
            <person name="Wu M."/>
            <person name="Huston A.L."/>
            <person name="Lewis M."/>
            <person name="Weaver B."/>
            <person name="Weidman J.F."/>
            <person name="Khouri H."/>
            <person name="Utterback T.R."/>
            <person name="Feldblyum T.V."/>
            <person name="Fraser C.M."/>
        </authorList>
    </citation>
    <scope>NUCLEOTIDE SEQUENCE [LARGE SCALE GENOMIC DNA]</scope>
    <source>
        <strain>34H / ATCC BAA-681</strain>
    </source>
</reference>
<accession>Q484U8</accession>
<evidence type="ECO:0000255" key="1">
    <source>
        <dbReference type="HAMAP-Rule" id="MF_01216"/>
    </source>
</evidence>
<organism>
    <name type="scientific">Colwellia psychrerythraea (strain 34H / ATCC BAA-681)</name>
    <name type="common">Vibrio psychroerythus</name>
    <dbReference type="NCBI Taxonomy" id="167879"/>
    <lineage>
        <taxon>Bacteria</taxon>
        <taxon>Pseudomonadati</taxon>
        <taxon>Pseudomonadota</taxon>
        <taxon>Gammaproteobacteria</taxon>
        <taxon>Alteromonadales</taxon>
        <taxon>Colwelliaceae</taxon>
        <taxon>Colwellia</taxon>
    </lineage>
</organism>
<comment type="function">
    <text evidence="1">Quinone reductase that provides resistance to thiol-specific stress caused by electrophilic quinones.</text>
</comment>
<comment type="function">
    <text evidence="1">Also exhibits azoreductase activity. Catalyzes the reductive cleavage of the azo bond in aromatic azo compounds to the corresponding amines.</text>
</comment>
<comment type="catalytic activity">
    <reaction evidence="1">
        <text>2 a quinone + NADH + H(+) = 2 a 1,4-benzosemiquinone + NAD(+)</text>
        <dbReference type="Rhea" id="RHEA:65952"/>
        <dbReference type="ChEBI" id="CHEBI:15378"/>
        <dbReference type="ChEBI" id="CHEBI:57540"/>
        <dbReference type="ChEBI" id="CHEBI:57945"/>
        <dbReference type="ChEBI" id="CHEBI:132124"/>
        <dbReference type="ChEBI" id="CHEBI:134225"/>
    </reaction>
</comment>
<comment type="catalytic activity">
    <reaction evidence="1">
        <text>N,N-dimethyl-1,4-phenylenediamine + anthranilate + 2 NAD(+) = 2-(4-dimethylaminophenyl)diazenylbenzoate + 2 NADH + 2 H(+)</text>
        <dbReference type="Rhea" id="RHEA:55872"/>
        <dbReference type="ChEBI" id="CHEBI:15378"/>
        <dbReference type="ChEBI" id="CHEBI:15783"/>
        <dbReference type="ChEBI" id="CHEBI:16567"/>
        <dbReference type="ChEBI" id="CHEBI:57540"/>
        <dbReference type="ChEBI" id="CHEBI:57945"/>
        <dbReference type="ChEBI" id="CHEBI:71579"/>
        <dbReference type="EC" id="1.7.1.17"/>
    </reaction>
</comment>
<comment type="cofactor">
    <cofactor evidence="1">
        <name>FMN</name>
        <dbReference type="ChEBI" id="CHEBI:58210"/>
    </cofactor>
    <text evidence="1">Binds 1 FMN per subunit.</text>
</comment>
<comment type="subunit">
    <text evidence="1">Homodimer.</text>
</comment>
<comment type="similarity">
    <text evidence="1">Belongs to the azoreductase type 1 family.</text>
</comment>
<gene>
    <name evidence="1" type="primary">azoR1</name>
    <name type="ordered locus">CPS_1679</name>
</gene>
<sequence>MNILRLDASMRKTGSYSRILTDKLIEQLTSGKNNEVTIRDLADGIPLIDENWIKANFTDVDERTCEQKVCLVASDILVDELYKAEHIVIGLPIYNFGVPAAFKAWIDQVVRSKLTFRYGDNGPVGLVENKKAYIIIASGGTKLGTEIDFISDYLRHILGFIGITDVTFIDSSGLGRDESQTLAHAHKAIERV</sequence>
<protein>
    <recommendedName>
        <fullName evidence="1">FMN-dependent NADH:quinone oxidoreductase 1</fullName>
        <ecNumber evidence="1">1.6.5.-</ecNumber>
    </recommendedName>
    <alternativeName>
        <fullName evidence="1">Azo-dye reductase 1</fullName>
    </alternativeName>
    <alternativeName>
        <fullName evidence="1">FMN-dependent NADH-azo compound oxidoreductase 1</fullName>
    </alternativeName>
    <alternativeName>
        <fullName evidence="1">FMN-dependent NADH-azoreductase 1</fullName>
        <ecNumber evidence="1">1.7.1.17</ecNumber>
    </alternativeName>
</protein>
<dbReference type="EC" id="1.6.5.-" evidence="1"/>
<dbReference type="EC" id="1.7.1.17" evidence="1"/>
<dbReference type="EMBL" id="CP000083">
    <property type="protein sequence ID" value="AAZ25042.1"/>
    <property type="molecule type" value="Genomic_DNA"/>
</dbReference>
<dbReference type="RefSeq" id="WP_011042511.1">
    <property type="nucleotide sequence ID" value="NC_003910.7"/>
</dbReference>
<dbReference type="SMR" id="Q484U8"/>
<dbReference type="STRING" id="167879.CPS_1679"/>
<dbReference type="KEGG" id="cps:CPS_1679"/>
<dbReference type="HOGENOM" id="CLU_088964_0_0_6"/>
<dbReference type="Proteomes" id="UP000000547">
    <property type="component" value="Chromosome"/>
</dbReference>
<dbReference type="GO" id="GO:0009055">
    <property type="term" value="F:electron transfer activity"/>
    <property type="evidence" value="ECO:0007669"/>
    <property type="project" value="UniProtKB-UniRule"/>
</dbReference>
<dbReference type="GO" id="GO:0010181">
    <property type="term" value="F:FMN binding"/>
    <property type="evidence" value="ECO:0007669"/>
    <property type="project" value="UniProtKB-UniRule"/>
</dbReference>
<dbReference type="GO" id="GO:0016652">
    <property type="term" value="F:oxidoreductase activity, acting on NAD(P)H as acceptor"/>
    <property type="evidence" value="ECO:0007669"/>
    <property type="project" value="UniProtKB-UniRule"/>
</dbReference>
<dbReference type="GO" id="GO:0016655">
    <property type="term" value="F:oxidoreductase activity, acting on NAD(P)H, quinone or similar compound as acceptor"/>
    <property type="evidence" value="ECO:0007669"/>
    <property type="project" value="InterPro"/>
</dbReference>
<dbReference type="Gene3D" id="3.40.50.360">
    <property type="match status" value="1"/>
</dbReference>
<dbReference type="HAMAP" id="MF_01216">
    <property type="entry name" value="Azoreductase_type1"/>
    <property type="match status" value="1"/>
</dbReference>
<dbReference type="InterPro" id="IPR003680">
    <property type="entry name" value="Flavodoxin_fold"/>
</dbReference>
<dbReference type="InterPro" id="IPR029039">
    <property type="entry name" value="Flavoprotein-like_sf"/>
</dbReference>
<dbReference type="InterPro" id="IPR050104">
    <property type="entry name" value="FMN-dep_NADH:Q_OxRdtase_AzoR1"/>
</dbReference>
<dbReference type="InterPro" id="IPR023048">
    <property type="entry name" value="NADH:quinone_OxRdtase_FMN_depd"/>
</dbReference>
<dbReference type="PANTHER" id="PTHR43741">
    <property type="entry name" value="FMN-DEPENDENT NADH-AZOREDUCTASE 1"/>
    <property type="match status" value="1"/>
</dbReference>
<dbReference type="PANTHER" id="PTHR43741:SF4">
    <property type="entry name" value="FMN-DEPENDENT NADH:QUINONE OXIDOREDUCTASE"/>
    <property type="match status" value="1"/>
</dbReference>
<dbReference type="Pfam" id="PF02525">
    <property type="entry name" value="Flavodoxin_2"/>
    <property type="match status" value="1"/>
</dbReference>
<dbReference type="SUPFAM" id="SSF52218">
    <property type="entry name" value="Flavoproteins"/>
    <property type="match status" value="1"/>
</dbReference>
<feature type="chain" id="PRO_0000245912" description="FMN-dependent NADH:quinone oxidoreductase 1">
    <location>
        <begin position="1"/>
        <end position="192"/>
    </location>
</feature>
<feature type="binding site" evidence="1">
    <location>
        <position position="9"/>
    </location>
    <ligand>
        <name>FMN</name>
        <dbReference type="ChEBI" id="CHEBI:58210"/>
    </ligand>
</feature>
<feature type="binding site" evidence="1">
    <location>
        <begin position="15"/>
        <end position="17"/>
    </location>
    <ligand>
        <name>FMN</name>
        <dbReference type="ChEBI" id="CHEBI:58210"/>
    </ligand>
</feature>
<proteinExistence type="inferred from homology"/>